<feature type="chain" id="PRO_0000061154" description="Cytochrome b">
    <location>
        <begin position="1"/>
        <end position="379"/>
    </location>
</feature>
<feature type="transmembrane region" description="Helical" evidence="2">
    <location>
        <begin position="33"/>
        <end position="53"/>
    </location>
</feature>
<feature type="transmembrane region" description="Helical" evidence="2">
    <location>
        <begin position="77"/>
        <end position="98"/>
    </location>
</feature>
<feature type="transmembrane region" description="Helical" evidence="2">
    <location>
        <begin position="113"/>
        <end position="133"/>
    </location>
</feature>
<feature type="transmembrane region" description="Helical" evidence="2">
    <location>
        <begin position="178"/>
        <end position="198"/>
    </location>
</feature>
<feature type="transmembrane region" description="Helical" evidence="2">
    <location>
        <begin position="226"/>
        <end position="246"/>
    </location>
</feature>
<feature type="transmembrane region" description="Helical" evidence="2">
    <location>
        <begin position="288"/>
        <end position="308"/>
    </location>
</feature>
<feature type="transmembrane region" description="Helical" evidence="2">
    <location>
        <begin position="320"/>
        <end position="340"/>
    </location>
</feature>
<feature type="transmembrane region" description="Helical" evidence="2">
    <location>
        <begin position="347"/>
        <end position="367"/>
    </location>
</feature>
<feature type="binding site" description="axial binding residue" evidence="2">
    <location>
        <position position="83"/>
    </location>
    <ligand>
        <name>heme b</name>
        <dbReference type="ChEBI" id="CHEBI:60344"/>
        <label>b562</label>
    </ligand>
    <ligandPart>
        <name>Fe</name>
        <dbReference type="ChEBI" id="CHEBI:18248"/>
    </ligandPart>
</feature>
<feature type="binding site" description="axial binding residue" evidence="2">
    <location>
        <position position="97"/>
    </location>
    <ligand>
        <name>heme b</name>
        <dbReference type="ChEBI" id="CHEBI:60344"/>
        <label>b566</label>
    </ligand>
    <ligandPart>
        <name>Fe</name>
        <dbReference type="ChEBI" id="CHEBI:18248"/>
    </ligandPart>
</feature>
<feature type="binding site" description="axial binding residue" evidence="2">
    <location>
        <position position="182"/>
    </location>
    <ligand>
        <name>heme b</name>
        <dbReference type="ChEBI" id="CHEBI:60344"/>
        <label>b562</label>
    </ligand>
    <ligandPart>
        <name>Fe</name>
        <dbReference type="ChEBI" id="CHEBI:18248"/>
    </ligandPart>
</feature>
<feature type="binding site" description="axial binding residue" evidence="2">
    <location>
        <position position="196"/>
    </location>
    <ligand>
        <name>heme b</name>
        <dbReference type="ChEBI" id="CHEBI:60344"/>
        <label>b566</label>
    </ligand>
    <ligandPart>
        <name>Fe</name>
        <dbReference type="ChEBI" id="CHEBI:18248"/>
    </ligandPart>
</feature>
<feature type="binding site" evidence="2">
    <location>
        <position position="201"/>
    </location>
    <ligand>
        <name>a ubiquinone</name>
        <dbReference type="ChEBI" id="CHEBI:16389"/>
    </ligand>
</feature>
<feature type="sequence variant" description="In strain: Isolate HS1224.">
    <original>IL</original>
    <variation>NI</variation>
    <location>
        <begin position="3"/>
        <end position="4"/>
    </location>
</feature>
<feature type="sequence variant" description="In strain: Isolate HS1224.">
    <original>Y</original>
    <variation>N</variation>
    <location>
        <position position="15"/>
    </location>
</feature>
<feature type="sequence variant" description="In strain: Isolate HS1224.">
    <original>T</original>
    <variation>S</variation>
    <location>
        <position position="67"/>
    </location>
</feature>
<feature type="sequence variant" description="In strain: Isolate MFL-CHI1.">
    <original>Y</original>
    <variation>H</variation>
    <location>
        <position position="107"/>
    </location>
</feature>
<feature type="sequence variant" description="In strain: Isolate HS1224.">
    <original>M</original>
    <variation>T</variation>
    <location>
        <position position="108"/>
    </location>
</feature>
<feature type="sequence variant" description="In strain: Isolate HS1224.">
    <original>A</original>
    <variation>T</variation>
    <location>
        <position position="122"/>
    </location>
</feature>
<feature type="sequence variant" description="In strain: Isolate MFL-CHI1.">
    <original>I</original>
    <variation>H</variation>
    <location>
        <position position="153"/>
    </location>
</feature>
<feature type="sequence variant" description="In strain: Isolate HS1224.">
    <original>N</original>
    <variation>T</variation>
    <location>
        <position position="158"/>
    </location>
</feature>
<geneLocation type="mitochondrion"/>
<comment type="function">
    <text evidence="2">Component of the ubiquinol-cytochrome c reductase complex (complex III or cytochrome b-c1 complex) that is part of the mitochondrial respiratory chain. The b-c1 complex mediates electron transfer from ubiquinol to cytochrome c. Contributes to the generation of a proton gradient across the mitochondrial membrane that is then used for ATP synthesis.</text>
</comment>
<comment type="cofactor">
    <cofactor evidence="2">
        <name>heme b</name>
        <dbReference type="ChEBI" id="CHEBI:60344"/>
    </cofactor>
    <text evidence="2">Binds 2 heme b groups non-covalently.</text>
</comment>
<comment type="subunit">
    <text evidence="2">The cytochrome bc1 complex contains 11 subunits: 3 respiratory subunits (MT-CYB, CYC1 and UQCRFS1), 2 core proteins (UQCRC1 and UQCRC2) and 6 low-molecular weight proteins (UQCRH/QCR6, UQCRB/QCR7, UQCRQ/QCR8, UQCR10/QCR9, UQCR11/QCR10 and a cleavage product of UQCRFS1). This cytochrome bc1 complex then forms a dimer.</text>
</comment>
<comment type="subcellular location">
    <subcellularLocation>
        <location evidence="2">Mitochondrion inner membrane</location>
        <topology evidence="2">Multi-pass membrane protein</topology>
    </subcellularLocation>
</comment>
<comment type="miscellaneous">
    <text evidence="1">Heme 1 (or BL or b562) is low-potential and absorbs at about 562 nm, and heme 2 (or BH or b566) is high-potential and absorbs at about 566 nm.</text>
</comment>
<comment type="similarity">
    <text evidence="3 4">Belongs to the cytochrome b family.</text>
</comment>
<comment type="caution">
    <text evidence="2">The full-length protein contains only eight transmembrane helices, not nine as predicted by bioinformatics tools.</text>
</comment>
<organism>
    <name type="scientific">Martes flavigula</name>
    <name type="common">Yellow-throated marten</name>
    <dbReference type="NCBI Taxonomy" id="74864"/>
    <lineage>
        <taxon>Eukaryota</taxon>
        <taxon>Metazoa</taxon>
        <taxon>Chordata</taxon>
        <taxon>Craniata</taxon>
        <taxon>Vertebrata</taxon>
        <taxon>Euteleostomi</taxon>
        <taxon>Mammalia</taxon>
        <taxon>Eutheria</taxon>
        <taxon>Laurasiatheria</taxon>
        <taxon>Carnivora</taxon>
        <taxon>Caniformia</taxon>
        <taxon>Musteloidea</taxon>
        <taxon>Mustelidae</taxon>
        <taxon>Guloninae</taxon>
        <taxon>Martes</taxon>
    </lineage>
</organism>
<dbReference type="EMBL" id="AB051235">
    <property type="protein sequence ID" value="BAB18187.1"/>
    <property type="molecule type" value="Genomic_DNA"/>
</dbReference>
<dbReference type="EMBL" id="AB012362">
    <property type="protein sequence ID" value="BAA83990.1"/>
    <property type="molecule type" value="Genomic_DNA"/>
</dbReference>
<dbReference type="EMBL" id="AB012363">
    <property type="protein sequence ID" value="BAA83991.1"/>
    <property type="molecule type" value="Genomic_DNA"/>
</dbReference>
<dbReference type="SMR" id="Q9TEB4"/>
<dbReference type="GO" id="GO:0005743">
    <property type="term" value="C:mitochondrial inner membrane"/>
    <property type="evidence" value="ECO:0007669"/>
    <property type="project" value="UniProtKB-SubCell"/>
</dbReference>
<dbReference type="GO" id="GO:0045275">
    <property type="term" value="C:respiratory chain complex III"/>
    <property type="evidence" value="ECO:0007669"/>
    <property type="project" value="InterPro"/>
</dbReference>
<dbReference type="GO" id="GO:0046872">
    <property type="term" value="F:metal ion binding"/>
    <property type="evidence" value="ECO:0007669"/>
    <property type="project" value="UniProtKB-KW"/>
</dbReference>
<dbReference type="GO" id="GO:0008121">
    <property type="term" value="F:ubiquinol-cytochrome-c reductase activity"/>
    <property type="evidence" value="ECO:0007669"/>
    <property type="project" value="InterPro"/>
</dbReference>
<dbReference type="GO" id="GO:0006122">
    <property type="term" value="P:mitochondrial electron transport, ubiquinol to cytochrome c"/>
    <property type="evidence" value="ECO:0007669"/>
    <property type="project" value="TreeGrafter"/>
</dbReference>
<dbReference type="CDD" id="cd00290">
    <property type="entry name" value="cytochrome_b_C"/>
    <property type="match status" value="1"/>
</dbReference>
<dbReference type="CDD" id="cd00284">
    <property type="entry name" value="Cytochrome_b_N"/>
    <property type="match status" value="1"/>
</dbReference>
<dbReference type="FunFam" id="1.20.810.10:FF:000002">
    <property type="entry name" value="Cytochrome b"/>
    <property type="match status" value="1"/>
</dbReference>
<dbReference type="Gene3D" id="1.20.810.10">
    <property type="entry name" value="Cytochrome Bc1 Complex, Chain C"/>
    <property type="match status" value="1"/>
</dbReference>
<dbReference type="InterPro" id="IPR005798">
    <property type="entry name" value="Cyt_b/b6_C"/>
</dbReference>
<dbReference type="InterPro" id="IPR036150">
    <property type="entry name" value="Cyt_b/b6_C_sf"/>
</dbReference>
<dbReference type="InterPro" id="IPR005797">
    <property type="entry name" value="Cyt_b/b6_N"/>
</dbReference>
<dbReference type="InterPro" id="IPR027387">
    <property type="entry name" value="Cytb/b6-like_sf"/>
</dbReference>
<dbReference type="InterPro" id="IPR030689">
    <property type="entry name" value="Cytochrome_b"/>
</dbReference>
<dbReference type="InterPro" id="IPR048260">
    <property type="entry name" value="Cytochrome_b_C_euk/bac"/>
</dbReference>
<dbReference type="InterPro" id="IPR048259">
    <property type="entry name" value="Cytochrome_b_N_euk/bac"/>
</dbReference>
<dbReference type="InterPro" id="IPR016174">
    <property type="entry name" value="Di-haem_cyt_TM"/>
</dbReference>
<dbReference type="PANTHER" id="PTHR19271">
    <property type="entry name" value="CYTOCHROME B"/>
    <property type="match status" value="1"/>
</dbReference>
<dbReference type="PANTHER" id="PTHR19271:SF16">
    <property type="entry name" value="CYTOCHROME B"/>
    <property type="match status" value="1"/>
</dbReference>
<dbReference type="Pfam" id="PF00032">
    <property type="entry name" value="Cytochrom_B_C"/>
    <property type="match status" value="1"/>
</dbReference>
<dbReference type="Pfam" id="PF00033">
    <property type="entry name" value="Cytochrome_B"/>
    <property type="match status" value="1"/>
</dbReference>
<dbReference type="PIRSF" id="PIRSF038885">
    <property type="entry name" value="COB"/>
    <property type="match status" value="1"/>
</dbReference>
<dbReference type="SUPFAM" id="SSF81648">
    <property type="entry name" value="a domain/subunit of cytochrome bc1 complex (Ubiquinol-cytochrome c reductase)"/>
    <property type="match status" value="1"/>
</dbReference>
<dbReference type="SUPFAM" id="SSF81342">
    <property type="entry name" value="Transmembrane di-heme cytochromes"/>
    <property type="match status" value="1"/>
</dbReference>
<dbReference type="PROSITE" id="PS51003">
    <property type="entry name" value="CYTB_CTER"/>
    <property type="match status" value="1"/>
</dbReference>
<dbReference type="PROSITE" id="PS51002">
    <property type="entry name" value="CYTB_NTER"/>
    <property type="match status" value="1"/>
</dbReference>
<evidence type="ECO:0000250" key="1"/>
<evidence type="ECO:0000250" key="2">
    <source>
        <dbReference type="UniProtKB" id="P00157"/>
    </source>
</evidence>
<evidence type="ECO:0000255" key="3">
    <source>
        <dbReference type="PROSITE-ProRule" id="PRU00967"/>
    </source>
</evidence>
<evidence type="ECO:0000255" key="4">
    <source>
        <dbReference type="PROSITE-ProRule" id="PRU00968"/>
    </source>
</evidence>
<keyword id="KW-0249">Electron transport</keyword>
<keyword id="KW-0349">Heme</keyword>
<keyword id="KW-0408">Iron</keyword>
<keyword id="KW-0472">Membrane</keyword>
<keyword id="KW-0479">Metal-binding</keyword>
<keyword id="KW-0496">Mitochondrion</keyword>
<keyword id="KW-0999">Mitochondrion inner membrane</keyword>
<keyword id="KW-0679">Respiratory chain</keyword>
<keyword id="KW-0812">Transmembrane</keyword>
<keyword id="KW-1133">Transmembrane helix</keyword>
<keyword id="KW-0813">Transport</keyword>
<keyword id="KW-0830">Ubiquinone</keyword>
<gene>
    <name type="primary">MT-CYB</name>
    <name type="synonym">COB</name>
    <name type="synonym">CYTB</name>
    <name type="synonym">MTCYB</name>
</gene>
<proteinExistence type="inferred from homology"/>
<protein>
    <recommendedName>
        <fullName>Cytochrome b</fullName>
    </recommendedName>
    <alternativeName>
        <fullName>Complex III subunit 3</fullName>
    </alternativeName>
    <alternativeName>
        <fullName>Complex III subunit III</fullName>
    </alternativeName>
    <alternativeName>
        <fullName>Cytochrome b-c1 complex subunit 3</fullName>
    </alternativeName>
    <alternativeName>
        <fullName>Ubiquinol-cytochrome-c reductase complex cytochrome b subunit</fullName>
    </alternativeName>
</protein>
<name>CYB_MARFA</name>
<reference key="1">
    <citation type="journal article" date="1999" name="Zool. Sci.">
        <title>Intraspecific variation of mitochondrial cytochrome b gene sequences of the Japanese marten Martes melampus and the sable Martes zibellina (Mustelidae, Carnivora, Mammalia) in Japan.</title>
        <authorList>
            <person name="Kurose N."/>
            <person name="Masuda R."/>
            <person name="Siriaroonrat B."/>
            <person name="Yoshida M.C."/>
        </authorList>
    </citation>
    <scope>NUCLEOTIDE SEQUENCE [GENOMIC DNA]</scope>
    <source>
        <strain>Isolate MFL-CHI1</strain>
        <strain>Isolate MFL-DUZ1</strain>
    </source>
</reference>
<reference key="2">
    <citation type="journal article" date="2000" name="Genes Genet. Syst.">
        <title>Evolutionary trends of the mitochondrial lineage differentiation in species of genera Martes and Mustela.</title>
        <authorList>
            <person name="Hosoda T."/>
            <person name="Suzuki H."/>
            <person name="Harada M."/>
            <person name="Tsuchiya K."/>
            <person name="Han S.H."/>
            <person name="Zhang Y."/>
            <person name="Kryukov A.P."/>
            <person name="Lin L.K."/>
        </authorList>
    </citation>
    <scope>NUCLEOTIDE SEQUENCE [GENOMIC DNA]</scope>
    <source>
        <strain>Isolate HS1224</strain>
    </source>
</reference>
<accession>Q9TEB4</accession>
<accession>Q9GBH2</accession>
<accession>Q9TEB3</accession>
<sequence>MTILRKTHPLAKIIYNSFIDLPAPSNISAWWNFGSLLGICLILQILTGLFLAMHYTSDTATAFSSVTHICRDVNYGWIIRYMHANGASMFFICLFLHVGRGLYYGSYMYPETWNIGIILLFAVMATAFMGYVLPWGQMSFWGATVITNLLSAIPYIGNSLVEWIWGGFSVDKATLTRFFAFHFILPFIISALAAVHLLFLHETGSNNPSGIPSDSDKIPFHPYYTIKDILGALFLILVLMVLVLFSPDLLGDPDNYIPANPLNTPPHIKPEWYFLFAYAILRSIPNKLGGVLALVFSILVLAIIPLLHTSKQRGMMFRPLSQCLFWLLVADLLVLTWIGGQPVEHPFITIGQLASILYFAILLIFMPIISIIENNLLKW</sequence>